<sequence>MVEKLWGGRFEASLDKQTEEFGASIKFEQRLAPFDLKGSLAHVKMLGETGIITAEEATTIANGLIKVEEKLMKGQIEFKIENEDIHMNMETYLHDEIGPLAGKLHTARSRNDQVATDMHLYLKSVLSDLLKALRTLRETIVNLSVNHVDTLMPGYTHLQHAQPISFAQHLMAYYQMFTRDFDRFEFNVKHTDMNPLGAAALAGTTFPIDRELTTNLLQFEKAYANSMDAVSDRDFILEFLSNSSLLMMHLSRLCEELLLWSSHEFNFVSLSDNYSTGSSIMPQKKNPDMAELIRGKSGRVYGNLMSLLTVMKGLPLTYNKDLQEDKEGMFDSADTILTSLSVMDGMLSTMTVNRVNMEKATEQDFSNATELADYLAAKGLPFREAHELVGQLVLTCIKKGIYLQEVSLKDYQALSQLIEEDVYEILQSRTAVSRRNSLGGTGFESIKKQIEQAKKELQK</sequence>
<evidence type="ECO:0000255" key="1">
    <source>
        <dbReference type="HAMAP-Rule" id="MF_00006"/>
    </source>
</evidence>
<dbReference type="EC" id="4.3.2.1" evidence="1"/>
<dbReference type="EMBL" id="CP000425">
    <property type="protein sequence ID" value="ABJ71747.1"/>
    <property type="molecule type" value="Genomic_DNA"/>
</dbReference>
<dbReference type="RefSeq" id="WP_011675182.1">
    <property type="nucleotide sequence ID" value="NC_008527.1"/>
</dbReference>
<dbReference type="SMR" id="Q032X5"/>
<dbReference type="KEGG" id="llc:LACR_0126"/>
<dbReference type="HOGENOM" id="CLU_027272_2_3_9"/>
<dbReference type="UniPathway" id="UPA00068">
    <property type="reaction ID" value="UER00114"/>
</dbReference>
<dbReference type="Proteomes" id="UP000000240">
    <property type="component" value="Chromosome"/>
</dbReference>
<dbReference type="GO" id="GO:0005829">
    <property type="term" value="C:cytosol"/>
    <property type="evidence" value="ECO:0007669"/>
    <property type="project" value="TreeGrafter"/>
</dbReference>
<dbReference type="GO" id="GO:0004056">
    <property type="term" value="F:argininosuccinate lyase activity"/>
    <property type="evidence" value="ECO:0007669"/>
    <property type="project" value="UniProtKB-UniRule"/>
</dbReference>
<dbReference type="GO" id="GO:0042450">
    <property type="term" value="P:arginine biosynthetic process via ornithine"/>
    <property type="evidence" value="ECO:0007669"/>
    <property type="project" value="InterPro"/>
</dbReference>
<dbReference type="GO" id="GO:0006526">
    <property type="term" value="P:L-arginine biosynthetic process"/>
    <property type="evidence" value="ECO:0007669"/>
    <property type="project" value="UniProtKB-UniRule"/>
</dbReference>
<dbReference type="CDD" id="cd01359">
    <property type="entry name" value="Argininosuccinate_lyase"/>
    <property type="match status" value="1"/>
</dbReference>
<dbReference type="FunFam" id="1.10.275.10:FF:000002">
    <property type="entry name" value="Argininosuccinate lyase"/>
    <property type="match status" value="1"/>
</dbReference>
<dbReference type="FunFam" id="1.10.40.30:FF:000001">
    <property type="entry name" value="Argininosuccinate lyase"/>
    <property type="match status" value="1"/>
</dbReference>
<dbReference type="FunFam" id="1.20.200.10:FF:000002">
    <property type="entry name" value="Argininosuccinate lyase"/>
    <property type="match status" value="1"/>
</dbReference>
<dbReference type="Gene3D" id="1.10.40.30">
    <property type="entry name" value="Fumarase/aspartase (C-terminal domain)"/>
    <property type="match status" value="1"/>
</dbReference>
<dbReference type="Gene3D" id="1.20.200.10">
    <property type="entry name" value="Fumarase/aspartase (Central domain)"/>
    <property type="match status" value="1"/>
</dbReference>
<dbReference type="Gene3D" id="1.10.275.10">
    <property type="entry name" value="Fumarase/aspartase (N-terminal domain)"/>
    <property type="match status" value="1"/>
</dbReference>
<dbReference type="HAMAP" id="MF_00006">
    <property type="entry name" value="Arg_succ_lyase"/>
    <property type="match status" value="1"/>
</dbReference>
<dbReference type="InterPro" id="IPR029419">
    <property type="entry name" value="Arg_succ_lyase_C"/>
</dbReference>
<dbReference type="InterPro" id="IPR009049">
    <property type="entry name" value="Argininosuccinate_lyase"/>
</dbReference>
<dbReference type="InterPro" id="IPR024083">
    <property type="entry name" value="Fumarase/histidase_N"/>
</dbReference>
<dbReference type="InterPro" id="IPR020557">
    <property type="entry name" value="Fumarate_lyase_CS"/>
</dbReference>
<dbReference type="InterPro" id="IPR000362">
    <property type="entry name" value="Fumarate_lyase_fam"/>
</dbReference>
<dbReference type="InterPro" id="IPR022761">
    <property type="entry name" value="Fumarate_lyase_N"/>
</dbReference>
<dbReference type="InterPro" id="IPR008948">
    <property type="entry name" value="L-Aspartase-like"/>
</dbReference>
<dbReference type="NCBIfam" id="TIGR00838">
    <property type="entry name" value="argH"/>
    <property type="match status" value="1"/>
</dbReference>
<dbReference type="PANTHER" id="PTHR43814">
    <property type="entry name" value="ARGININOSUCCINATE LYASE"/>
    <property type="match status" value="1"/>
</dbReference>
<dbReference type="PANTHER" id="PTHR43814:SF1">
    <property type="entry name" value="ARGININOSUCCINATE LYASE"/>
    <property type="match status" value="1"/>
</dbReference>
<dbReference type="Pfam" id="PF14698">
    <property type="entry name" value="ASL_C2"/>
    <property type="match status" value="1"/>
</dbReference>
<dbReference type="Pfam" id="PF00206">
    <property type="entry name" value="Lyase_1"/>
    <property type="match status" value="1"/>
</dbReference>
<dbReference type="PRINTS" id="PR00145">
    <property type="entry name" value="ARGSUCLYASE"/>
</dbReference>
<dbReference type="PRINTS" id="PR00149">
    <property type="entry name" value="FUMRATELYASE"/>
</dbReference>
<dbReference type="SUPFAM" id="SSF48557">
    <property type="entry name" value="L-aspartase-like"/>
    <property type="match status" value="1"/>
</dbReference>
<dbReference type="PROSITE" id="PS00163">
    <property type="entry name" value="FUMARATE_LYASES"/>
    <property type="match status" value="1"/>
</dbReference>
<name>ARLY_LACLS</name>
<gene>
    <name evidence="1" type="primary">argH</name>
    <name type="ordered locus">LACR_0126</name>
</gene>
<protein>
    <recommendedName>
        <fullName evidence="1">Argininosuccinate lyase</fullName>
        <shortName evidence="1">ASAL</shortName>
        <ecNumber evidence="1">4.3.2.1</ecNumber>
    </recommendedName>
    <alternativeName>
        <fullName evidence="1">Arginosuccinase</fullName>
    </alternativeName>
</protein>
<comment type="catalytic activity">
    <reaction evidence="1">
        <text>2-(N(omega)-L-arginino)succinate = fumarate + L-arginine</text>
        <dbReference type="Rhea" id="RHEA:24020"/>
        <dbReference type="ChEBI" id="CHEBI:29806"/>
        <dbReference type="ChEBI" id="CHEBI:32682"/>
        <dbReference type="ChEBI" id="CHEBI:57472"/>
        <dbReference type="EC" id="4.3.2.1"/>
    </reaction>
</comment>
<comment type="pathway">
    <text evidence="1">Amino-acid biosynthesis; L-arginine biosynthesis; L-arginine from L-ornithine and carbamoyl phosphate: step 3/3.</text>
</comment>
<comment type="subcellular location">
    <subcellularLocation>
        <location evidence="1">Cytoplasm</location>
    </subcellularLocation>
</comment>
<comment type="similarity">
    <text evidence="1">Belongs to the lyase 1 family. Argininosuccinate lyase subfamily.</text>
</comment>
<keyword id="KW-0028">Amino-acid biosynthesis</keyword>
<keyword id="KW-0055">Arginine biosynthesis</keyword>
<keyword id="KW-0963">Cytoplasm</keyword>
<keyword id="KW-0456">Lyase</keyword>
<reference key="1">
    <citation type="journal article" date="2006" name="Proc. Natl. Acad. Sci. U.S.A.">
        <title>Comparative genomics of the lactic acid bacteria.</title>
        <authorList>
            <person name="Makarova K.S."/>
            <person name="Slesarev A."/>
            <person name="Wolf Y.I."/>
            <person name="Sorokin A."/>
            <person name="Mirkin B."/>
            <person name="Koonin E.V."/>
            <person name="Pavlov A."/>
            <person name="Pavlova N."/>
            <person name="Karamychev V."/>
            <person name="Polouchine N."/>
            <person name="Shakhova V."/>
            <person name="Grigoriev I."/>
            <person name="Lou Y."/>
            <person name="Rohksar D."/>
            <person name="Lucas S."/>
            <person name="Huang K."/>
            <person name="Goodstein D.M."/>
            <person name="Hawkins T."/>
            <person name="Plengvidhya V."/>
            <person name="Welker D."/>
            <person name="Hughes J."/>
            <person name="Goh Y."/>
            <person name="Benson A."/>
            <person name="Baldwin K."/>
            <person name="Lee J.-H."/>
            <person name="Diaz-Muniz I."/>
            <person name="Dosti B."/>
            <person name="Smeianov V."/>
            <person name="Wechter W."/>
            <person name="Barabote R."/>
            <person name="Lorca G."/>
            <person name="Altermann E."/>
            <person name="Barrangou R."/>
            <person name="Ganesan B."/>
            <person name="Xie Y."/>
            <person name="Rawsthorne H."/>
            <person name="Tamir D."/>
            <person name="Parker C."/>
            <person name="Breidt F."/>
            <person name="Broadbent J.R."/>
            <person name="Hutkins R."/>
            <person name="O'Sullivan D."/>
            <person name="Steele J."/>
            <person name="Unlu G."/>
            <person name="Saier M.H. Jr."/>
            <person name="Klaenhammer T."/>
            <person name="Richardson P."/>
            <person name="Kozyavkin S."/>
            <person name="Weimer B.C."/>
            <person name="Mills D.A."/>
        </authorList>
    </citation>
    <scope>NUCLEOTIDE SEQUENCE [LARGE SCALE GENOMIC DNA]</scope>
    <source>
        <strain>SK11</strain>
    </source>
</reference>
<proteinExistence type="inferred from homology"/>
<feature type="chain" id="PRO_1000000490" description="Argininosuccinate lyase">
    <location>
        <begin position="1"/>
        <end position="459"/>
    </location>
</feature>
<organism>
    <name type="scientific">Lactococcus lactis subsp. cremoris (strain SK11)</name>
    <dbReference type="NCBI Taxonomy" id="272622"/>
    <lineage>
        <taxon>Bacteria</taxon>
        <taxon>Bacillati</taxon>
        <taxon>Bacillota</taxon>
        <taxon>Bacilli</taxon>
        <taxon>Lactobacillales</taxon>
        <taxon>Streptococcaceae</taxon>
        <taxon>Lactococcus</taxon>
        <taxon>Lactococcus cremoris subsp. cremoris</taxon>
    </lineage>
</organism>
<accession>Q032X5</accession>